<organism>
    <name type="scientific">Natronomonas pharaonis (strain ATCC 35678 / DSM 2160 / CIP 103997 / JCM 8858 / NBRC 14720 / NCIMB 2260 / Gabara)</name>
    <name type="common">Halobacterium pharaonis</name>
    <dbReference type="NCBI Taxonomy" id="348780"/>
    <lineage>
        <taxon>Archaea</taxon>
        <taxon>Methanobacteriati</taxon>
        <taxon>Methanobacteriota</taxon>
        <taxon>Stenosarchaea group</taxon>
        <taxon>Halobacteria</taxon>
        <taxon>Halobacteriales</taxon>
        <taxon>Haloarculaceae</taxon>
        <taxon>Natronomonas</taxon>
    </lineage>
</organism>
<keyword id="KW-0963">Cytoplasm</keyword>
<keyword id="KW-0413">Isomerase</keyword>
<keyword id="KW-0627">Porphyrin biosynthesis</keyword>
<keyword id="KW-0663">Pyridoxal phosphate</keyword>
<keyword id="KW-1185">Reference proteome</keyword>
<evidence type="ECO:0000255" key="1">
    <source>
        <dbReference type="HAMAP-Rule" id="MF_00375"/>
    </source>
</evidence>
<accession>Q3IT20</accession>
<feature type="chain" id="PRO_0000243649" description="Glutamate-1-semialdehyde 2,1-aminomutase">
    <location>
        <begin position="1"/>
        <end position="446"/>
    </location>
</feature>
<feature type="modified residue" description="N6-(pyridoxal phosphate)lysine" evidence="1">
    <location>
        <position position="264"/>
    </location>
</feature>
<dbReference type="EC" id="5.4.3.8" evidence="1"/>
<dbReference type="EMBL" id="CR936257">
    <property type="protein sequence ID" value="CAI48714.1"/>
    <property type="molecule type" value="Genomic_DNA"/>
</dbReference>
<dbReference type="RefSeq" id="WP_011322350.1">
    <property type="nucleotide sequence ID" value="NC_007426.1"/>
</dbReference>
<dbReference type="SMR" id="Q3IT20"/>
<dbReference type="STRING" id="348780.NP_1246A"/>
<dbReference type="EnsemblBacteria" id="CAI48714">
    <property type="protein sequence ID" value="CAI48714"/>
    <property type="gene ID" value="NP_1246A"/>
</dbReference>
<dbReference type="GeneID" id="3702810"/>
<dbReference type="KEGG" id="nph:NP_1246A"/>
<dbReference type="eggNOG" id="arCOG00918">
    <property type="taxonomic scope" value="Archaea"/>
</dbReference>
<dbReference type="HOGENOM" id="CLU_016922_1_5_2"/>
<dbReference type="OrthoDB" id="6524at2157"/>
<dbReference type="UniPathway" id="UPA00251">
    <property type="reaction ID" value="UER00317"/>
</dbReference>
<dbReference type="Proteomes" id="UP000002698">
    <property type="component" value="Chromosome"/>
</dbReference>
<dbReference type="GO" id="GO:0005737">
    <property type="term" value="C:cytoplasm"/>
    <property type="evidence" value="ECO:0007669"/>
    <property type="project" value="UniProtKB-SubCell"/>
</dbReference>
<dbReference type="GO" id="GO:0042286">
    <property type="term" value="F:glutamate-1-semialdehyde 2,1-aminomutase activity"/>
    <property type="evidence" value="ECO:0007669"/>
    <property type="project" value="UniProtKB-UniRule"/>
</dbReference>
<dbReference type="GO" id="GO:0030170">
    <property type="term" value="F:pyridoxal phosphate binding"/>
    <property type="evidence" value="ECO:0007669"/>
    <property type="project" value="InterPro"/>
</dbReference>
<dbReference type="GO" id="GO:0008483">
    <property type="term" value="F:transaminase activity"/>
    <property type="evidence" value="ECO:0007669"/>
    <property type="project" value="InterPro"/>
</dbReference>
<dbReference type="GO" id="GO:0006782">
    <property type="term" value="P:protoporphyrinogen IX biosynthetic process"/>
    <property type="evidence" value="ECO:0007669"/>
    <property type="project" value="UniProtKB-UniRule"/>
</dbReference>
<dbReference type="CDD" id="cd00610">
    <property type="entry name" value="OAT_like"/>
    <property type="match status" value="1"/>
</dbReference>
<dbReference type="FunFam" id="3.40.640.10:FF:000021">
    <property type="entry name" value="Glutamate-1-semialdehyde 2,1-aminomutase"/>
    <property type="match status" value="1"/>
</dbReference>
<dbReference type="Gene3D" id="3.90.1150.10">
    <property type="entry name" value="Aspartate Aminotransferase, domain 1"/>
    <property type="match status" value="1"/>
</dbReference>
<dbReference type="Gene3D" id="3.40.640.10">
    <property type="entry name" value="Type I PLP-dependent aspartate aminotransferase-like (Major domain)"/>
    <property type="match status" value="1"/>
</dbReference>
<dbReference type="HAMAP" id="MF_00375">
    <property type="entry name" value="HemL_aminotrans_3"/>
    <property type="match status" value="1"/>
</dbReference>
<dbReference type="InterPro" id="IPR004639">
    <property type="entry name" value="4pyrrol_synth_GluAld_NH2Trfase"/>
</dbReference>
<dbReference type="InterPro" id="IPR005814">
    <property type="entry name" value="Aminotrans_3"/>
</dbReference>
<dbReference type="InterPro" id="IPR049704">
    <property type="entry name" value="Aminotrans_3_PPA_site"/>
</dbReference>
<dbReference type="InterPro" id="IPR015424">
    <property type="entry name" value="PyrdxlP-dep_Trfase"/>
</dbReference>
<dbReference type="InterPro" id="IPR015421">
    <property type="entry name" value="PyrdxlP-dep_Trfase_major"/>
</dbReference>
<dbReference type="InterPro" id="IPR015422">
    <property type="entry name" value="PyrdxlP-dep_Trfase_small"/>
</dbReference>
<dbReference type="NCBIfam" id="NF000818">
    <property type="entry name" value="PRK00062.1"/>
    <property type="match status" value="1"/>
</dbReference>
<dbReference type="PANTHER" id="PTHR43713">
    <property type="entry name" value="GLUTAMATE-1-SEMIALDEHYDE 2,1-AMINOMUTASE"/>
    <property type="match status" value="1"/>
</dbReference>
<dbReference type="PANTHER" id="PTHR43713:SF3">
    <property type="entry name" value="GLUTAMATE-1-SEMIALDEHYDE 2,1-AMINOMUTASE 1, CHLOROPLASTIC-RELATED"/>
    <property type="match status" value="1"/>
</dbReference>
<dbReference type="Pfam" id="PF00202">
    <property type="entry name" value="Aminotran_3"/>
    <property type="match status" value="1"/>
</dbReference>
<dbReference type="SUPFAM" id="SSF53383">
    <property type="entry name" value="PLP-dependent transferases"/>
    <property type="match status" value="1"/>
</dbReference>
<dbReference type="PROSITE" id="PS00600">
    <property type="entry name" value="AA_TRANSFER_CLASS_3"/>
    <property type="match status" value="1"/>
</dbReference>
<comment type="catalytic activity">
    <reaction evidence="1">
        <text>(S)-4-amino-5-oxopentanoate = 5-aminolevulinate</text>
        <dbReference type="Rhea" id="RHEA:14265"/>
        <dbReference type="ChEBI" id="CHEBI:57501"/>
        <dbReference type="ChEBI" id="CHEBI:356416"/>
        <dbReference type="EC" id="5.4.3.8"/>
    </reaction>
</comment>
<comment type="cofactor">
    <cofactor evidence="1">
        <name>pyridoxal 5'-phosphate</name>
        <dbReference type="ChEBI" id="CHEBI:597326"/>
    </cofactor>
</comment>
<comment type="pathway">
    <text evidence="1">Porphyrin-containing compound metabolism; protoporphyrin-IX biosynthesis; 5-aminolevulinate from L-glutamyl-tRNA(Glu): step 2/2.</text>
</comment>
<comment type="subcellular location">
    <subcellularLocation>
        <location evidence="1">Cytoplasm</location>
    </subcellularLocation>
</comment>
<comment type="similarity">
    <text evidence="1">Belongs to the class-III pyridoxal-phosphate-dependent aminotransferase family. HemL subfamily.</text>
</comment>
<proteinExistence type="inferred from homology"/>
<reference key="1">
    <citation type="journal article" date="2005" name="Genome Res.">
        <title>Living with two extremes: conclusions from the genome sequence of Natronomonas pharaonis.</title>
        <authorList>
            <person name="Falb M."/>
            <person name="Pfeiffer F."/>
            <person name="Palm P."/>
            <person name="Rodewald K."/>
            <person name="Hickmann V."/>
            <person name="Tittor J."/>
            <person name="Oesterhelt D."/>
        </authorList>
    </citation>
    <scope>NUCLEOTIDE SEQUENCE [LARGE SCALE GENOMIC DNA]</scope>
    <source>
        <strain>ATCC 35678 / DSM 2160 / CIP 103997 / JCM 8858 / NBRC 14720 / NCIMB 2260 / Gabara</strain>
    </source>
</reference>
<gene>
    <name evidence="1" type="primary">hemL</name>
    <name type="ordered locus">NP_1246A</name>
</gene>
<name>GSA_NATPD</name>
<protein>
    <recommendedName>
        <fullName evidence="1">Glutamate-1-semialdehyde 2,1-aminomutase</fullName>
        <shortName evidence="1">GSA</shortName>
        <ecNumber evidence="1">5.4.3.8</ecNumber>
    </recommendedName>
    <alternativeName>
        <fullName evidence="1">Glutamate-1-semialdehyde aminotransferase</fullName>
        <shortName evidence="1">GSA-AT</shortName>
    </alternativeName>
</protein>
<sequence length="446" mass="48114">MNHEGSRSLYDRALSVLPGGVNSAVRAAPQPYPVFADHGDGGHVIDADGNRYIDWIQGLGPLLLGHDMPEQLQAAVQSRASEGPMYGMPSEIEVEHAEFVCRHVPSVEMIRFVNSGTEATVSACRLARAATGRNKIVVMQGGYHGAQESTLVEGDADDVAPSSAGIPQSFAEHTIPVPFNDPEAASEVFRAHGDDIAAVLVEPVQANMGIVYPEDGYHEALRSLCDDYGSLLIFDEVITGFRVGGLQCAQGKFDIDPDITTFGKIIGGGFPVGAIGGKTEYIEQFTPSGDVFQAGTFSGHPVTMAAGLETLKFCAEEDVYDHVNELGRQLREGLSDIVADQAPEYTVVGTDSLFKVVFTRGDGTPQGEACRNGCRQSSDCSRYGTCPTSATDVRDAETDRYARLFRPKMIEEGVLVSQNQFESNFVSYRHTAEDVEETLEAYKEAL</sequence>